<sequence length="82" mass="9293">MNAIRYPFITEKAMMLMDENKLQFVVDTRANKTQVENDVVKMYGFTVKSVCTMTTMKGLKKALVTFNETDAAHEIATRIGLV</sequence>
<protein>
    <recommendedName>
        <fullName evidence="1">Large ribosomal subunit protein uL23</fullName>
    </recommendedName>
    <alternativeName>
        <fullName evidence="2">50S ribosomal protein L23</fullName>
    </alternativeName>
</protein>
<proteinExistence type="inferred from homology"/>
<gene>
    <name evidence="1" type="primary">rpl23</name>
    <name type="ordered locus">Mbur_0003</name>
</gene>
<dbReference type="EMBL" id="CP000300">
    <property type="protein sequence ID" value="ABE51027.1"/>
    <property type="molecule type" value="Genomic_DNA"/>
</dbReference>
<dbReference type="RefSeq" id="WP_011498191.1">
    <property type="nucleotide sequence ID" value="NC_007955.1"/>
</dbReference>
<dbReference type="SMR" id="Q12ZU9"/>
<dbReference type="STRING" id="259564.Mbur_0003"/>
<dbReference type="GeneID" id="3996833"/>
<dbReference type="KEGG" id="mbu:Mbur_0003"/>
<dbReference type="HOGENOM" id="CLU_037562_4_2_2"/>
<dbReference type="OrthoDB" id="7751at2157"/>
<dbReference type="Proteomes" id="UP000001979">
    <property type="component" value="Chromosome"/>
</dbReference>
<dbReference type="GO" id="GO:1990904">
    <property type="term" value="C:ribonucleoprotein complex"/>
    <property type="evidence" value="ECO:0007669"/>
    <property type="project" value="UniProtKB-KW"/>
</dbReference>
<dbReference type="GO" id="GO:0005840">
    <property type="term" value="C:ribosome"/>
    <property type="evidence" value="ECO:0007669"/>
    <property type="project" value="UniProtKB-KW"/>
</dbReference>
<dbReference type="GO" id="GO:0019843">
    <property type="term" value="F:rRNA binding"/>
    <property type="evidence" value="ECO:0007669"/>
    <property type="project" value="UniProtKB-UniRule"/>
</dbReference>
<dbReference type="GO" id="GO:0003735">
    <property type="term" value="F:structural constituent of ribosome"/>
    <property type="evidence" value="ECO:0007669"/>
    <property type="project" value="InterPro"/>
</dbReference>
<dbReference type="GO" id="GO:0006412">
    <property type="term" value="P:translation"/>
    <property type="evidence" value="ECO:0007669"/>
    <property type="project" value="UniProtKB-UniRule"/>
</dbReference>
<dbReference type="FunFam" id="3.30.70.330:FF:000532">
    <property type="entry name" value="50S ribosomal protein L23"/>
    <property type="match status" value="1"/>
</dbReference>
<dbReference type="Gene3D" id="3.30.70.330">
    <property type="match status" value="1"/>
</dbReference>
<dbReference type="HAMAP" id="MF_01369_A">
    <property type="entry name" value="Ribosomal_uL23_A"/>
    <property type="match status" value="1"/>
</dbReference>
<dbReference type="InterPro" id="IPR012677">
    <property type="entry name" value="Nucleotide-bd_a/b_plait_sf"/>
</dbReference>
<dbReference type="InterPro" id="IPR013025">
    <property type="entry name" value="Ribosomal_uL23-like"/>
</dbReference>
<dbReference type="InterPro" id="IPR012678">
    <property type="entry name" value="Ribosomal_uL23/eL15/eS24_sf"/>
</dbReference>
<dbReference type="NCBIfam" id="NF011118">
    <property type="entry name" value="PRK14548.1"/>
    <property type="match status" value="1"/>
</dbReference>
<dbReference type="PANTHER" id="PTHR11620">
    <property type="entry name" value="60S RIBOSOMAL PROTEIN L23A"/>
    <property type="match status" value="1"/>
</dbReference>
<dbReference type="Pfam" id="PF00276">
    <property type="entry name" value="Ribosomal_L23"/>
    <property type="match status" value="1"/>
</dbReference>
<dbReference type="SUPFAM" id="SSF54189">
    <property type="entry name" value="Ribosomal proteins S24e, L23 and L15e"/>
    <property type="match status" value="1"/>
</dbReference>
<evidence type="ECO:0000255" key="1">
    <source>
        <dbReference type="HAMAP-Rule" id="MF_01369"/>
    </source>
</evidence>
<evidence type="ECO:0000305" key="2"/>
<organism>
    <name type="scientific">Methanococcoides burtonii (strain DSM 6242 / NBRC 107633 / OCM 468 / ACE-M)</name>
    <dbReference type="NCBI Taxonomy" id="259564"/>
    <lineage>
        <taxon>Archaea</taxon>
        <taxon>Methanobacteriati</taxon>
        <taxon>Methanobacteriota</taxon>
        <taxon>Stenosarchaea group</taxon>
        <taxon>Methanomicrobia</taxon>
        <taxon>Methanosarcinales</taxon>
        <taxon>Methanosarcinaceae</taxon>
        <taxon>Methanococcoides</taxon>
    </lineage>
</organism>
<name>RL23_METBU</name>
<reference key="1">
    <citation type="journal article" date="2009" name="ISME J.">
        <title>The genome sequence of the psychrophilic archaeon, Methanococcoides burtonii: the role of genome evolution in cold adaptation.</title>
        <authorList>
            <person name="Allen M.A."/>
            <person name="Lauro F.M."/>
            <person name="Williams T.J."/>
            <person name="Burg D."/>
            <person name="Siddiqui K.S."/>
            <person name="De Francisci D."/>
            <person name="Chong K.W."/>
            <person name="Pilak O."/>
            <person name="Chew H.H."/>
            <person name="De Maere M.Z."/>
            <person name="Ting L."/>
            <person name="Katrib M."/>
            <person name="Ng C."/>
            <person name="Sowers K.R."/>
            <person name="Galperin M.Y."/>
            <person name="Anderson I.J."/>
            <person name="Ivanova N."/>
            <person name="Dalin E."/>
            <person name="Martinez M."/>
            <person name="Lapidus A."/>
            <person name="Hauser L."/>
            <person name="Land M."/>
            <person name="Thomas T."/>
            <person name="Cavicchioli R."/>
        </authorList>
    </citation>
    <scope>NUCLEOTIDE SEQUENCE [LARGE SCALE GENOMIC DNA]</scope>
    <source>
        <strain>DSM 6242 / NBRC 107633 / OCM 468 / ACE-M</strain>
    </source>
</reference>
<feature type="chain" id="PRO_0000272941" description="Large ribosomal subunit protein uL23">
    <location>
        <begin position="1"/>
        <end position="82"/>
    </location>
</feature>
<accession>Q12ZU9</accession>
<comment type="function">
    <text evidence="1">Binds to 23S rRNA. One of the proteins that surrounds the polypeptide exit tunnel on the outside of the ribosome.</text>
</comment>
<comment type="subunit">
    <text evidence="1">Part of the 50S ribosomal subunit. Contacts protein L29.</text>
</comment>
<comment type="similarity">
    <text evidence="1">Belongs to the universal ribosomal protein uL23 family.</text>
</comment>
<keyword id="KW-0687">Ribonucleoprotein</keyword>
<keyword id="KW-0689">Ribosomal protein</keyword>
<keyword id="KW-0694">RNA-binding</keyword>
<keyword id="KW-0699">rRNA-binding</keyword>